<feature type="initiator methionine" description="Removed" evidence="1">
    <location>
        <position position="1"/>
    </location>
</feature>
<feature type="chain" id="PRO_0000073798" description="Neurocalcin">
    <location>
        <begin position="2"/>
        <end position="193"/>
    </location>
</feature>
<feature type="domain" description="EF-hand 1" evidence="3">
    <location>
        <begin position="40"/>
        <end position="58"/>
    </location>
</feature>
<feature type="domain" description="EF-hand 2" evidence="3">
    <location>
        <begin position="60"/>
        <end position="95"/>
    </location>
</feature>
<feature type="domain" description="EF-hand 3" evidence="3">
    <location>
        <begin position="96"/>
        <end position="131"/>
    </location>
</feature>
<feature type="domain" description="EF-hand 4" evidence="3">
    <location>
        <begin position="144"/>
        <end position="179"/>
    </location>
</feature>
<feature type="binding site" evidence="3">
    <location>
        <position position="73"/>
    </location>
    <ligand>
        <name>Ca(2+)</name>
        <dbReference type="ChEBI" id="CHEBI:29108"/>
        <label>1</label>
    </ligand>
</feature>
<feature type="binding site" evidence="3">
    <location>
        <position position="75"/>
    </location>
    <ligand>
        <name>Ca(2+)</name>
        <dbReference type="ChEBI" id="CHEBI:29108"/>
        <label>1</label>
    </ligand>
</feature>
<feature type="binding site" evidence="3">
    <location>
        <position position="77"/>
    </location>
    <ligand>
        <name>Ca(2+)</name>
        <dbReference type="ChEBI" id="CHEBI:29108"/>
        <label>1</label>
    </ligand>
</feature>
<feature type="binding site" evidence="3">
    <location>
        <position position="79"/>
    </location>
    <ligand>
        <name>Ca(2+)</name>
        <dbReference type="ChEBI" id="CHEBI:29108"/>
        <label>1</label>
    </ligand>
</feature>
<feature type="binding site" evidence="3">
    <location>
        <position position="84"/>
    </location>
    <ligand>
        <name>Ca(2+)</name>
        <dbReference type="ChEBI" id="CHEBI:29108"/>
        <label>1</label>
    </ligand>
</feature>
<feature type="binding site" evidence="3">
    <location>
        <position position="109"/>
    </location>
    <ligand>
        <name>Ca(2+)</name>
        <dbReference type="ChEBI" id="CHEBI:29108"/>
        <label>2</label>
    </ligand>
</feature>
<feature type="binding site" evidence="3">
    <location>
        <position position="111"/>
    </location>
    <ligand>
        <name>Ca(2+)</name>
        <dbReference type="ChEBI" id="CHEBI:29108"/>
        <label>2</label>
    </ligand>
</feature>
<feature type="binding site" evidence="3">
    <location>
        <position position="113"/>
    </location>
    <ligand>
        <name>Ca(2+)</name>
        <dbReference type="ChEBI" id="CHEBI:29108"/>
        <label>2</label>
    </ligand>
</feature>
<feature type="binding site" evidence="3">
    <location>
        <position position="115"/>
    </location>
    <ligand>
        <name>Ca(2+)</name>
        <dbReference type="ChEBI" id="CHEBI:29108"/>
        <label>2</label>
    </ligand>
</feature>
<feature type="binding site" evidence="3">
    <location>
        <position position="120"/>
    </location>
    <ligand>
        <name>Ca(2+)</name>
        <dbReference type="ChEBI" id="CHEBI:29108"/>
        <label>2</label>
    </ligand>
</feature>
<feature type="binding site" evidence="3">
    <location>
        <position position="157"/>
    </location>
    <ligand>
        <name>Ca(2+)</name>
        <dbReference type="ChEBI" id="CHEBI:29108"/>
        <label>3</label>
    </ligand>
</feature>
<feature type="binding site" evidence="3">
    <location>
        <position position="159"/>
    </location>
    <ligand>
        <name>Ca(2+)</name>
        <dbReference type="ChEBI" id="CHEBI:29108"/>
        <label>3</label>
    </ligand>
</feature>
<feature type="binding site" evidence="3">
    <location>
        <position position="161"/>
    </location>
    <ligand>
        <name>Ca(2+)</name>
        <dbReference type="ChEBI" id="CHEBI:29108"/>
        <label>3</label>
    </ligand>
</feature>
<feature type="binding site" evidence="3">
    <location>
        <position position="163"/>
    </location>
    <ligand>
        <name>Ca(2+)</name>
        <dbReference type="ChEBI" id="CHEBI:29108"/>
        <label>3</label>
    </ligand>
</feature>
<feature type="binding site" evidence="3">
    <location>
        <position position="168"/>
    </location>
    <ligand>
        <name>Ca(2+)</name>
        <dbReference type="ChEBI" id="CHEBI:29108"/>
        <label>3</label>
    </ligand>
</feature>
<feature type="lipid moiety-binding region" description="N-myristoyl glycine" evidence="2">
    <location>
        <position position="2"/>
    </location>
</feature>
<reference key="1">
    <citation type="journal article" date="1996" name="J. Neurochem.">
        <title>Cloning and characterization of aplycalcin and Aplysia neurocalcin, two new members of the calmodulin superfamily of small calcium-binding proteins.</title>
        <authorList>
            <person name="Dyer J.R."/>
            <person name="Sossin W.S."/>
            <person name="Klein M."/>
        </authorList>
    </citation>
    <scope>NUCLEOTIDE SEQUENCE [MRNA]</scope>
</reference>
<protein>
    <recommendedName>
        <fullName>Neurocalcin</fullName>
    </recommendedName>
</protein>
<accession>Q16982</accession>
<proteinExistence type="evidence at transcript level"/>
<keyword id="KW-0106">Calcium</keyword>
<keyword id="KW-0449">Lipoprotein</keyword>
<keyword id="KW-0479">Metal-binding</keyword>
<keyword id="KW-0519">Myristate</keyword>
<keyword id="KW-0677">Repeat</keyword>
<evidence type="ECO:0000250" key="1"/>
<evidence type="ECO:0000255" key="2"/>
<evidence type="ECO:0000255" key="3">
    <source>
        <dbReference type="PROSITE-ProRule" id="PRU00448"/>
    </source>
</evidence>
<evidence type="ECO:0000305" key="4"/>
<name>NECX_APLCA</name>
<comment type="miscellaneous">
    <text evidence="1">Probably binds two or three calcium ions.</text>
</comment>
<comment type="similarity">
    <text evidence="4">Belongs to the recoverin family.</text>
</comment>
<sequence length="193" mass="22279">MGKQNSKLKPEVLEDLRHQTQFSEEELQEWYKGSLKDCPSGHLSVEEFKKIYGNFFPYGDASRFAEHVFRTFDTNGDGSIDFREFICALSVTSRGQLEQKLRWAFSMYDLDGNGYISRQEMLEIVTAIYKMVGTVMKMPEDESTPERRTDKIFRQMDKNMDGRLSIDEFIEGAKSDPSIVRLLQCDPQAATQS</sequence>
<organism>
    <name type="scientific">Aplysia californica</name>
    <name type="common">California sea hare</name>
    <dbReference type="NCBI Taxonomy" id="6500"/>
    <lineage>
        <taxon>Eukaryota</taxon>
        <taxon>Metazoa</taxon>
        <taxon>Spiralia</taxon>
        <taxon>Lophotrochozoa</taxon>
        <taxon>Mollusca</taxon>
        <taxon>Gastropoda</taxon>
        <taxon>Heterobranchia</taxon>
        <taxon>Euthyneura</taxon>
        <taxon>Tectipleura</taxon>
        <taxon>Aplysiida</taxon>
        <taxon>Aplysioidea</taxon>
        <taxon>Aplysiidae</taxon>
        <taxon>Aplysia</taxon>
    </lineage>
</organism>
<dbReference type="EMBL" id="U61223">
    <property type="protein sequence ID" value="AAB36880.1"/>
    <property type="molecule type" value="mRNA"/>
</dbReference>
<dbReference type="RefSeq" id="NP_001191469.1">
    <property type="nucleotide sequence ID" value="NM_001204540.1"/>
</dbReference>
<dbReference type="SMR" id="Q16982"/>
<dbReference type="EnsemblMetazoa" id="NM_001204540.1">
    <property type="protein sequence ID" value="NP_001191469.1"/>
    <property type="gene ID" value="LOC100533223"/>
</dbReference>
<dbReference type="GeneID" id="100533223"/>
<dbReference type="OrthoDB" id="191686at2759"/>
<dbReference type="Proteomes" id="UP000694888">
    <property type="component" value="Unplaced"/>
</dbReference>
<dbReference type="GO" id="GO:0005509">
    <property type="term" value="F:calcium ion binding"/>
    <property type="evidence" value="ECO:0007669"/>
    <property type="project" value="InterPro"/>
</dbReference>
<dbReference type="CDD" id="cd00051">
    <property type="entry name" value="EFh"/>
    <property type="match status" value="2"/>
</dbReference>
<dbReference type="FunFam" id="1.10.238.10:FF:000009">
    <property type="entry name" value="Visinin-like protein 1"/>
    <property type="match status" value="1"/>
</dbReference>
<dbReference type="Gene3D" id="1.10.238.10">
    <property type="entry name" value="EF-hand"/>
    <property type="match status" value="1"/>
</dbReference>
<dbReference type="InterPro" id="IPR011992">
    <property type="entry name" value="EF-hand-dom_pair"/>
</dbReference>
<dbReference type="InterPro" id="IPR018247">
    <property type="entry name" value="EF_Hand_1_Ca_BS"/>
</dbReference>
<dbReference type="InterPro" id="IPR002048">
    <property type="entry name" value="EF_hand_dom"/>
</dbReference>
<dbReference type="InterPro" id="IPR028846">
    <property type="entry name" value="Recoverin"/>
</dbReference>
<dbReference type="PANTHER" id="PTHR23055">
    <property type="entry name" value="CALCIUM BINDING PROTEINS"/>
    <property type="match status" value="1"/>
</dbReference>
<dbReference type="PANTHER" id="PTHR23055:SF178">
    <property type="entry name" value="NEUROCALCIN HOMOLOG"/>
    <property type="match status" value="1"/>
</dbReference>
<dbReference type="Pfam" id="PF13499">
    <property type="entry name" value="EF-hand_7"/>
    <property type="match status" value="2"/>
</dbReference>
<dbReference type="PRINTS" id="PR00450">
    <property type="entry name" value="RECOVERIN"/>
</dbReference>
<dbReference type="SMART" id="SM00054">
    <property type="entry name" value="EFh"/>
    <property type="match status" value="3"/>
</dbReference>
<dbReference type="SUPFAM" id="SSF47473">
    <property type="entry name" value="EF-hand"/>
    <property type="match status" value="1"/>
</dbReference>
<dbReference type="PROSITE" id="PS00018">
    <property type="entry name" value="EF_HAND_1"/>
    <property type="match status" value="3"/>
</dbReference>
<dbReference type="PROSITE" id="PS50222">
    <property type="entry name" value="EF_HAND_2"/>
    <property type="match status" value="4"/>
</dbReference>